<evidence type="ECO:0000255" key="1">
    <source>
        <dbReference type="HAMAP-Rule" id="MF_00270"/>
    </source>
</evidence>
<evidence type="ECO:0000305" key="2"/>
<gene>
    <name evidence="1" type="primary">rpsR</name>
    <name type="ordered locus">BCE33L5169</name>
</gene>
<keyword id="KW-0687">Ribonucleoprotein</keyword>
<keyword id="KW-0689">Ribosomal protein</keyword>
<keyword id="KW-0694">RNA-binding</keyword>
<keyword id="KW-0699">rRNA-binding</keyword>
<dbReference type="EMBL" id="CP000001">
    <property type="protein sequence ID" value="AAU20299.1"/>
    <property type="molecule type" value="Genomic_DNA"/>
</dbReference>
<dbReference type="RefSeq" id="WP_000918874.1">
    <property type="nucleotide sequence ID" value="NZ_CP009968.1"/>
</dbReference>
<dbReference type="SMR" id="Q630D0"/>
<dbReference type="GeneID" id="92885945"/>
<dbReference type="KEGG" id="bcz:BCE33L5169"/>
<dbReference type="PATRIC" id="fig|288681.22.peg.172"/>
<dbReference type="Proteomes" id="UP000002612">
    <property type="component" value="Chromosome"/>
</dbReference>
<dbReference type="GO" id="GO:0022627">
    <property type="term" value="C:cytosolic small ribosomal subunit"/>
    <property type="evidence" value="ECO:0007669"/>
    <property type="project" value="TreeGrafter"/>
</dbReference>
<dbReference type="GO" id="GO:0070181">
    <property type="term" value="F:small ribosomal subunit rRNA binding"/>
    <property type="evidence" value="ECO:0007669"/>
    <property type="project" value="TreeGrafter"/>
</dbReference>
<dbReference type="GO" id="GO:0003735">
    <property type="term" value="F:structural constituent of ribosome"/>
    <property type="evidence" value="ECO:0007669"/>
    <property type="project" value="InterPro"/>
</dbReference>
<dbReference type="GO" id="GO:0006412">
    <property type="term" value="P:translation"/>
    <property type="evidence" value="ECO:0007669"/>
    <property type="project" value="UniProtKB-UniRule"/>
</dbReference>
<dbReference type="FunFam" id="4.10.640.10:FF:000003">
    <property type="entry name" value="30S ribosomal protein S18"/>
    <property type="match status" value="1"/>
</dbReference>
<dbReference type="Gene3D" id="4.10.640.10">
    <property type="entry name" value="Ribosomal protein S18"/>
    <property type="match status" value="1"/>
</dbReference>
<dbReference type="HAMAP" id="MF_00270">
    <property type="entry name" value="Ribosomal_bS18"/>
    <property type="match status" value="1"/>
</dbReference>
<dbReference type="InterPro" id="IPR001648">
    <property type="entry name" value="Ribosomal_bS18"/>
</dbReference>
<dbReference type="InterPro" id="IPR018275">
    <property type="entry name" value="Ribosomal_bS18_CS"/>
</dbReference>
<dbReference type="InterPro" id="IPR036870">
    <property type="entry name" value="Ribosomal_bS18_sf"/>
</dbReference>
<dbReference type="NCBIfam" id="TIGR00165">
    <property type="entry name" value="S18"/>
    <property type="match status" value="1"/>
</dbReference>
<dbReference type="PANTHER" id="PTHR13479">
    <property type="entry name" value="30S RIBOSOMAL PROTEIN S18"/>
    <property type="match status" value="1"/>
</dbReference>
<dbReference type="PANTHER" id="PTHR13479:SF40">
    <property type="entry name" value="SMALL RIBOSOMAL SUBUNIT PROTEIN BS18M"/>
    <property type="match status" value="1"/>
</dbReference>
<dbReference type="Pfam" id="PF01084">
    <property type="entry name" value="Ribosomal_S18"/>
    <property type="match status" value="1"/>
</dbReference>
<dbReference type="PRINTS" id="PR00974">
    <property type="entry name" value="RIBOSOMALS18"/>
</dbReference>
<dbReference type="SUPFAM" id="SSF46911">
    <property type="entry name" value="Ribosomal protein S18"/>
    <property type="match status" value="1"/>
</dbReference>
<dbReference type="PROSITE" id="PS00057">
    <property type="entry name" value="RIBOSOMAL_S18"/>
    <property type="match status" value="1"/>
</dbReference>
<organism>
    <name type="scientific">Bacillus cereus (strain ZK / E33L)</name>
    <dbReference type="NCBI Taxonomy" id="288681"/>
    <lineage>
        <taxon>Bacteria</taxon>
        <taxon>Bacillati</taxon>
        <taxon>Bacillota</taxon>
        <taxon>Bacilli</taxon>
        <taxon>Bacillales</taxon>
        <taxon>Bacillaceae</taxon>
        <taxon>Bacillus</taxon>
        <taxon>Bacillus cereus group</taxon>
    </lineage>
</organism>
<protein>
    <recommendedName>
        <fullName evidence="1">Small ribosomal subunit protein bS18</fullName>
    </recommendedName>
    <alternativeName>
        <fullName evidence="2">30S ribosomal protein S18</fullName>
    </alternativeName>
</protein>
<proteinExistence type="inferred from homology"/>
<reference key="1">
    <citation type="journal article" date="2006" name="J. Bacteriol.">
        <title>Pathogenomic sequence analysis of Bacillus cereus and Bacillus thuringiensis isolates closely related to Bacillus anthracis.</title>
        <authorList>
            <person name="Han C.S."/>
            <person name="Xie G."/>
            <person name="Challacombe J.F."/>
            <person name="Altherr M.R."/>
            <person name="Bhotika S.S."/>
            <person name="Bruce D."/>
            <person name="Campbell C.S."/>
            <person name="Campbell M.L."/>
            <person name="Chen J."/>
            <person name="Chertkov O."/>
            <person name="Cleland C."/>
            <person name="Dimitrijevic M."/>
            <person name="Doggett N.A."/>
            <person name="Fawcett J.J."/>
            <person name="Glavina T."/>
            <person name="Goodwin L.A."/>
            <person name="Hill K.K."/>
            <person name="Hitchcock P."/>
            <person name="Jackson P.J."/>
            <person name="Keim P."/>
            <person name="Kewalramani A.R."/>
            <person name="Longmire J."/>
            <person name="Lucas S."/>
            <person name="Malfatti S."/>
            <person name="McMurry K."/>
            <person name="Meincke L.J."/>
            <person name="Misra M."/>
            <person name="Moseman B.L."/>
            <person name="Mundt M."/>
            <person name="Munk A.C."/>
            <person name="Okinaka R.T."/>
            <person name="Parson-Quintana B."/>
            <person name="Reilly L.P."/>
            <person name="Richardson P."/>
            <person name="Robinson D.L."/>
            <person name="Rubin E."/>
            <person name="Saunders E."/>
            <person name="Tapia R."/>
            <person name="Tesmer J.G."/>
            <person name="Thayer N."/>
            <person name="Thompson L.S."/>
            <person name="Tice H."/>
            <person name="Ticknor L.O."/>
            <person name="Wills P.L."/>
            <person name="Brettin T.S."/>
            <person name="Gilna P."/>
        </authorList>
    </citation>
    <scope>NUCLEOTIDE SEQUENCE [LARGE SCALE GENOMIC DNA]</scope>
    <source>
        <strain>ZK / E33L</strain>
    </source>
</reference>
<feature type="chain" id="PRO_0000111111" description="Small ribosomal subunit protein bS18">
    <location>
        <begin position="1"/>
        <end position="77"/>
    </location>
</feature>
<name>RS18_BACCZ</name>
<accession>Q630D0</accession>
<sequence>MAGRKGGRAKRRKVCFFTSNGITRIDYKDVDLLKRFVSERGKILPRRVTGTSAKYQRKLTVAIKRARQMALLPYVGE</sequence>
<comment type="function">
    <text evidence="1">Binds as a heterodimer with protein bS6 to the central domain of the 16S rRNA, where it helps stabilize the platform of the 30S subunit.</text>
</comment>
<comment type="subunit">
    <text evidence="1">Part of the 30S ribosomal subunit. Forms a tight heterodimer with protein bS6.</text>
</comment>
<comment type="similarity">
    <text evidence="1">Belongs to the bacterial ribosomal protein bS18 family.</text>
</comment>